<organism>
    <name type="scientific">Mycolicibacterium gilvum (strain PYR-GCK)</name>
    <name type="common">Mycobacterium gilvum (strain PYR-GCK)</name>
    <dbReference type="NCBI Taxonomy" id="350054"/>
    <lineage>
        <taxon>Bacteria</taxon>
        <taxon>Bacillati</taxon>
        <taxon>Actinomycetota</taxon>
        <taxon>Actinomycetes</taxon>
        <taxon>Mycobacteriales</taxon>
        <taxon>Mycobacteriaceae</taxon>
        <taxon>Mycolicibacterium</taxon>
    </lineage>
</organism>
<gene>
    <name evidence="1" type="primary">atpE</name>
    <name type="ordered locus">Mflv_2313</name>
</gene>
<sequence>MDPTIAAGALIGGGLIMAGGAIGAGIGDGIAGNALISGIARQPEAQGRLFTPFFITVGLVEAAYFINLAFMALFVFATPVG</sequence>
<proteinExistence type="inferred from homology"/>
<accession>A4T8K8</accession>
<feature type="chain" id="PRO_1000184415" description="ATP synthase subunit c">
    <location>
        <begin position="1"/>
        <end position="81"/>
    </location>
</feature>
<feature type="transmembrane region" description="Helical" evidence="1">
    <location>
        <begin position="5"/>
        <end position="25"/>
    </location>
</feature>
<feature type="transmembrane region" description="Helical" evidence="1">
    <location>
        <begin position="57"/>
        <end position="77"/>
    </location>
</feature>
<feature type="site" description="Reversibly protonated during proton transport" evidence="1">
    <location>
        <position position="61"/>
    </location>
</feature>
<protein>
    <recommendedName>
        <fullName evidence="1">ATP synthase subunit c</fullName>
    </recommendedName>
    <alternativeName>
        <fullName evidence="1">ATP synthase F(0) sector subunit c</fullName>
    </alternativeName>
    <alternativeName>
        <fullName evidence="1">F-type ATPase subunit c</fullName>
        <shortName evidence="1">F-ATPase subunit c</shortName>
    </alternativeName>
    <alternativeName>
        <fullName evidence="1">Lipid-binding protein</fullName>
    </alternativeName>
</protein>
<dbReference type="EMBL" id="CP000656">
    <property type="protein sequence ID" value="ABP44791.1"/>
    <property type="molecule type" value="Genomic_DNA"/>
</dbReference>
<dbReference type="SMR" id="A4T8K8"/>
<dbReference type="STRING" id="350054.Mflv_2313"/>
<dbReference type="KEGG" id="mgi:Mflv_2313"/>
<dbReference type="eggNOG" id="COG0636">
    <property type="taxonomic scope" value="Bacteria"/>
</dbReference>
<dbReference type="HOGENOM" id="CLU_148047_1_2_11"/>
<dbReference type="OrthoDB" id="3578447at2"/>
<dbReference type="GO" id="GO:0005886">
    <property type="term" value="C:plasma membrane"/>
    <property type="evidence" value="ECO:0007669"/>
    <property type="project" value="UniProtKB-SubCell"/>
</dbReference>
<dbReference type="GO" id="GO:0045259">
    <property type="term" value="C:proton-transporting ATP synthase complex"/>
    <property type="evidence" value="ECO:0007669"/>
    <property type="project" value="UniProtKB-KW"/>
</dbReference>
<dbReference type="GO" id="GO:0033177">
    <property type="term" value="C:proton-transporting two-sector ATPase complex, proton-transporting domain"/>
    <property type="evidence" value="ECO:0007669"/>
    <property type="project" value="InterPro"/>
</dbReference>
<dbReference type="GO" id="GO:0008289">
    <property type="term" value="F:lipid binding"/>
    <property type="evidence" value="ECO:0007669"/>
    <property type="project" value="UniProtKB-KW"/>
</dbReference>
<dbReference type="GO" id="GO:0046933">
    <property type="term" value="F:proton-transporting ATP synthase activity, rotational mechanism"/>
    <property type="evidence" value="ECO:0007669"/>
    <property type="project" value="UniProtKB-UniRule"/>
</dbReference>
<dbReference type="FunFam" id="1.20.20.10:FF:000010">
    <property type="entry name" value="ATP synthase subunit c"/>
    <property type="match status" value="1"/>
</dbReference>
<dbReference type="Gene3D" id="1.20.20.10">
    <property type="entry name" value="F1F0 ATP synthase subunit C"/>
    <property type="match status" value="1"/>
</dbReference>
<dbReference type="HAMAP" id="MF_01396">
    <property type="entry name" value="ATP_synth_c_bact"/>
    <property type="match status" value="1"/>
</dbReference>
<dbReference type="InterPro" id="IPR005953">
    <property type="entry name" value="ATP_synth_csu_bac/chlpt"/>
</dbReference>
<dbReference type="InterPro" id="IPR000454">
    <property type="entry name" value="ATP_synth_F0_csu"/>
</dbReference>
<dbReference type="InterPro" id="IPR020537">
    <property type="entry name" value="ATP_synth_F0_csu_DDCD_BS"/>
</dbReference>
<dbReference type="InterPro" id="IPR038662">
    <property type="entry name" value="ATP_synth_F0_csu_sf"/>
</dbReference>
<dbReference type="InterPro" id="IPR002379">
    <property type="entry name" value="ATPase_proteolipid_c-like_dom"/>
</dbReference>
<dbReference type="InterPro" id="IPR035921">
    <property type="entry name" value="F/V-ATP_Csub_sf"/>
</dbReference>
<dbReference type="NCBIfam" id="TIGR01260">
    <property type="entry name" value="ATP_synt_c"/>
    <property type="match status" value="1"/>
</dbReference>
<dbReference type="NCBIfam" id="NF004532">
    <property type="entry name" value="PRK05880.1"/>
    <property type="match status" value="1"/>
</dbReference>
<dbReference type="Pfam" id="PF00137">
    <property type="entry name" value="ATP-synt_C"/>
    <property type="match status" value="1"/>
</dbReference>
<dbReference type="PRINTS" id="PR00124">
    <property type="entry name" value="ATPASEC"/>
</dbReference>
<dbReference type="SUPFAM" id="SSF81333">
    <property type="entry name" value="F1F0 ATP synthase subunit C"/>
    <property type="match status" value="1"/>
</dbReference>
<dbReference type="PROSITE" id="PS00605">
    <property type="entry name" value="ATPASE_C"/>
    <property type="match status" value="1"/>
</dbReference>
<comment type="function">
    <text evidence="1">F(1)F(0) ATP synthase produces ATP from ADP in the presence of a proton or sodium gradient. F-type ATPases consist of two structural domains, F(1) containing the extramembraneous catalytic core and F(0) containing the membrane proton channel, linked together by a central stalk and a peripheral stalk. During catalysis, ATP synthesis in the catalytic domain of F(1) is coupled via a rotary mechanism of the central stalk subunits to proton translocation.</text>
</comment>
<comment type="function">
    <text evidence="1">Key component of the F(0) channel; it plays a direct role in translocation across the membrane. A homomeric c-ring of between 10-14 subunits forms the central stalk rotor element with the F(1) delta and epsilon subunits.</text>
</comment>
<comment type="subunit">
    <text evidence="1">F-type ATPases have 2 components, F(1) - the catalytic core - and F(0) - the membrane proton channel. F(1) has five subunits: alpha(3), beta(3), gamma(1), delta(1), epsilon(1). F(0) has three main subunits: a(1), b(2) and c(10-14). The alpha and beta chains form an alternating ring which encloses part of the gamma chain. F(1) is attached to F(0) by a central stalk formed by the gamma and epsilon chains, while a peripheral stalk is formed by the delta and b chains.</text>
</comment>
<comment type="subcellular location">
    <subcellularLocation>
        <location evidence="1">Cell membrane</location>
        <topology evidence="1">Multi-pass membrane protein</topology>
    </subcellularLocation>
</comment>
<comment type="similarity">
    <text evidence="1">Belongs to the ATPase C chain family.</text>
</comment>
<evidence type="ECO:0000255" key="1">
    <source>
        <dbReference type="HAMAP-Rule" id="MF_01396"/>
    </source>
</evidence>
<name>ATPL_MYCGI</name>
<keyword id="KW-0066">ATP synthesis</keyword>
<keyword id="KW-1003">Cell membrane</keyword>
<keyword id="KW-0138">CF(0)</keyword>
<keyword id="KW-0375">Hydrogen ion transport</keyword>
<keyword id="KW-0406">Ion transport</keyword>
<keyword id="KW-0446">Lipid-binding</keyword>
<keyword id="KW-0472">Membrane</keyword>
<keyword id="KW-0812">Transmembrane</keyword>
<keyword id="KW-1133">Transmembrane helix</keyword>
<keyword id="KW-0813">Transport</keyword>
<reference key="1">
    <citation type="submission" date="2007-04" db="EMBL/GenBank/DDBJ databases">
        <title>Complete sequence of chromosome of Mycobacterium gilvum PYR-GCK.</title>
        <authorList>
            <consortium name="US DOE Joint Genome Institute"/>
            <person name="Copeland A."/>
            <person name="Lucas S."/>
            <person name="Lapidus A."/>
            <person name="Barry K."/>
            <person name="Detter J.C."/>
            <person name="Glavina del Rio T."/>
            <person name="Hammon N."/>
            <person name="Israni S."/>
            <person name="Dalin E."/>
            <person name="Tice H."/>
            <person name="Pitluck S."/>
            <person name="Chain P."/>
            <person name="Malfatti S."/>
            <person name="Shin M."/>
            <person name="Vergez L."/>
            <person name="Schmutz J."/>
            <person name="Larimer F."/>
            <person name="Land M."/>
            <person name="Hauser L."/>
            <person name="Kyrpides N."/>
            <person name="Mikhailova N."/>
            <person name="Miller C."/>
            <person name="Richardson P."/>
        </authorList>
    </citation>
    <scope>NUCLEOTIDE SEQUENCE [LARGE SCALE GENOMIC DNA]</scope>
    <source>
        <strain>PYR-GCK</strain>
    </source>
</reference>